<evidence type="ECO:0000255" key="1">
    <source>
        <dbReference type="HAMAP-Rule" id="MF_01328"/>
    </source>
</evidence>
<evidence type="ECO:0000256" key="2">
    <source>
        <dbReference type="SAM" id="MobiDB-lite"/>
    </source>
</evidence>
<evidence type="ECO:0000305" key="3"/>
<name>RL4_AGGAC</name>
<protein>
    <recommendedName>
        <fullName evidence="1">Large ribosomal subunit protein uL4</fullName>
    </recommendedName>
    <alternativeName>
        <fullName evidence="3">50S ribosomal protein L4</fullName>
    </alternativeName>
</protein>
<reference key="1">
    <citation type="journal article" date="1996" name="Microbiology">
        <title>Molecular analysis of a new insertion sequence from Actinobacillus (Haemophilus) actinomycetemcomitans FDC Y4.</title>
        <authorList>
            <person name="Hayashida H."/>
            <person name="Hotokezaka H."/>
            <person name="Ohara N."/>
            <person name="Kimura M."/>
            <person name="Takagi O."/>
            <person name="Yamada T."/>
        </authorList>
    </citation>
    <scope>NUCLEOTIDE SEQUENCE [GENOMIC DNA]</scope>
    <source>
        <strain>ATCC 43718 / FDC Y4 / Serotype b</strain>
    </source>
</reference>
<dbReference type="EMBL" id="D64071">
    <property type="protein sequence ID" value="BAA10948.1"/>
    <property type="molecule type" value="Genomic_DNA"/>
</dbReference>
<dbReference type="RefSeq" id="WP_005545485.1">
    <property type="nucleotide sequence ID" value="NZ_VSEW01000015.1"/>
</dbReference>
<dbReference type="SMR" id="P55836"/>
<dbReference type="STRING" id="714.ACT75_03755"/>
<dbReference type="GeneID" id="77210695"/>
<dbReference type="eggNOG" id="COG0088">
    <property type="taxonomic scope" value="Bacteria"/>
</dbReference>
<dbReference type="OMA" id="PQVHILE"/>
<dbReference type="GO" id="GO:1990904">
    <property type="term" value="C:ribonucleoprotein complex"/>
    <property type="evidence" value="ECO:0007669"/>
    <property type="project" value="UniProtKB-KW"/>
</dbReference>
<dbReference type="GO" id="GO:0005840">
    <property type="term" value="C:ribosome"/>
    <property type="evidence" value="ECO:0007669"/>
    <property type="project" value="UniProtKB-KW"/>
</dbReference>
<dbReference type="GO" id="GO:0019843">
    <property type="term" value="F:rRNA binding"/>
    <property type="evidence" value="ECO:0007669"/>
    <property type="project" value="UniProtKB-UniRule"/>
</dbReference>
<dbReference type="GO" id="GO:0003735">
    <property type="term" value="F:structural constituent of ribosome"/>
    <property type="evidence" value="ECO:0007669"/>
    <property type="project" value="InterPro"/>
</dbReference>
<dbReference type="GO" id="GO:0006412">
    <property type="term" value="P:translation"/>
    <property type="evidence" value="ECO:0007669"/>
    <property type="project" value="UniProtKB-UniRule"/>
</dbReference>
<dbReference type="FunFam" id="3.40.1370.10:FF:000001">
    <property type="entry name" value="50S ribosomal protein L4"/>
    <property type="match status" value="1"/>
</dbReference>
<dbReference type="Gene3D" id="3.40.1370.10">
    <property type="match status" value="1"/>
</dbReference>
<dbReference type="HAMAP" id="MF_01328_B">
    <property type="entry name" value="Ribosomal_uL4_B"/>
    <property type="match status" value="1"/>
</dbReference>
<dbReference type="InterPro" id="IPR002136">
    <property type="entry name" value="Ribosomal_uL4"/>
</dbReference>
<dbReference type="InterPro" id="IPR013005">
    <property type="entry name" value="Ribosomal_uL4-like"/>
</dbReference>
<dbReference type="InterPro" id="IPR023574">
    <property type="entry name" value="Ribosomal_uL4_dom_sf"/>
</dbReference>
<dbReference type="NCBIfam" id="TIGR03953">
    <property type="entry name" value="rplD_bact"/>
    <property type="match status" value="1"/>
</dbReference>
<dbReference type="PANTHER" id="PTHR10746">
    <property type="entry name" value="50S RIBOSOMAL PROTEIN L4"/>
    <property type="match status" value="1"/>
</dbReference>
<dbReference type="PANTHER" id="PTHR10746:SF6">
    <property type="entry name" value="LARGE RIBOSOMAL SUBUNIT PROTEIN UL4M"/>
    <property type="match status" value="1"/>
</dbReference>
<dbReference type="Pfam" id="PF00573">
    <property type="entry name" value="Ribosomal_L4"/>
    <property type="match status" value="1"/>
</dbReference>
<dbReference type="SUPFAM" id="SSF52166">
    <property type="entry name" value="Ribosomal protein L4"/>
    <property type="match status" value="1"/>
</dbReference>
<accession>P55836</accession>
<keyword id="KW-0687">Ribonucleoprotein</keyword>
<keyword id="KW-0689">Ribosomal protein</keyword>
<keyword id="KW-0694">RNA-binding</keyword>
<keyword id="KW-0699">rRNA-binding</keyword>
<organism>
    <name type="scientific">Aggregatibacter actinomycetemcomitans</name>
    <name type="common">Actinobacillus actinomycetemcomitans</name>
    <name type="synonym">Haemophilus actinomycetemcomitans</name>
    <dbReference type="NCBI Taxonomy" id="714"/>
    <lineage>
        <taxon>Bacteria</taxon>
        <taxon>Pseudomonadati</taxon>
        <taxon>Pseudomonadota</taxon>
        <taxon>Gammaproteobacteria</taxon>
        <taxon>Pasteurellales</taxon>
        <taxon>Pasteurellaceae</taxon>
        <taxon>Aggregatibacter</taxon>
    </lineage>
</organism>
<proteinExistence type="inferred from homology"/>
<gene>
    <name evidence="1" type="primary">rplD</name>
</gene>
<sequence>MELQVVGANALTVSETTFGREFNEALIHQVVVAYAAGARQGSRAQKTRAEVSGSGKKPWRQKGTGRARSGDIRSPIWRSGGVTFAAKPQDHSQKVNKKMYRGAIKSILSELVRQDRLVVVDKFEIDAPKTKVLVQKLKELALEDVLIITASLDENLFLAARNLYKVDVRDAQGIDPVSLIAFDKVVVTVDAVKQIEEMLA</sequence>
<feature type="chain" id="PRO_0000129174" description="Large ribosomal subunit protein uL4">
    <location>
        <begin position="1"/>
        <end position="200"/>
    </location>
</feature>
<feature type="region of interest" description="Disordered" evidence="2">
    <location>
        <begin position="43"/>
        <end position="71"/>
    </location>
</feature>
<comment type="function">
    <text evidence="1">One of the primary rRNA binding proteins, this protein initially binds near the 5'-end of the 23S rRNA. It is important during the early stages of 50S assembly. It makes multiple contacts with different domains of the 23S rRNA in the assembled 50S subunit and ribosome.</text>
</comment>
<comment type="function">
    <text evidence="1">Forms part of the polypeptide exit tunnel.</text>
</comment>
<comment type="subunit">
    <text evidence="1">Part of the 50S ribosomal subunit.</text>
</comment>
<comment type="similarity">
    <text evidence="1">Belongs to the universal ribosomal protein uL4 family.</text>
</comment>